<reference key="1">
    <citation type="journal article" date="2003" name="Nat. Genet.">
        <title>Comparative analysis of the genome sequences of Bordetella pertussis, Bordetella parapertussis and Bordetella bronchiseptica.</title>
        <authorList>
            <person name="Parkhill J."/>
            <person name="Sebaihia M."/>
            <person name="Preston A."/>
            <person name="Murphy L.D."/>
            <person name="Thomson N.R."/>
            <person name="Harris D.E."/>
            <person name="Holden M.T.G."/>
            <person name="Churcher C.M."/>
            <person name="Bentley S.D."/>
            <person name="Mungall K.L."/>
            <person name="Cerdeno-Tarraga A.-M."/>
            <person name="Temple L."/>
            <person name="James K.D."/>
            <person name="Harris B."/>
            <person name="Quail M.A."/>
            <person name="Achtman M."/>
            <person name="Atkin R."/>
            <person name="Baker S."/>
            <person name="Basham D."/>
            <person name="Bason N."/>
            <person name="Cherevach I."/>
            <person name="Chillingworth T."/>
            <person name="Collins M."/>
            <person name="Cronin A."/>
            <person name="Davis P."/>
            <person name="Doggett J."/>
            <person name="Feltwell T."/>
            <person name="Goble A."/>
            <person name="Hamlin N."/>
            <person name="Hauser H."/>
            <person name="Holroyd S."/>
            <person name="Jagels K."/>
            <person name="Leather S."/>
            <person name="Moule S."/>
            <person name="Norberczak H."/>
            <person name="O'Neil S."/>
            <person name="Ormond D."/>
            <person name="Price C."/>
            <person name="Rabbinowitsch E."/>
            <person name="Rutter S."/>
            <person name="Sanders M."/>
            <person name="Saunders D."/>
            <person name="Seeger K."/>
            <person name="Sharp S."/>
            <person name="Simmonds M."/>
            <person name="Skelton J."/>
            <person name="Squares R."/>
            <person name="Squares S."/>
            <person name="Stevens K."/>
            <person name="Unwin L."/>
            <person name="Whitehead S."/>
            <person name="Barrell B.G."/>
            <person name="Maskell D.J."/>
        </authorList>
    </citation>
    <scope>NUCLEOTIDE SEQUENCE [LARGE SCALE GENOMIC DNA]</scope>
    <source>
        <strain>ATCC BAA-588 / NCTC 13252 / RB50</strain>
    </source>
</reference>
<evidence type="ECO:0000255" key="1">
    <source>
        <dbReference type="HAMAP-Rule" id="MF_00368"/>
    </source>
</evidence>
<evidence type="ECO:0000305" key="2"/>
<proteinExistence type="inferred from homology"/>
<keyword id="KW-0687">Ribonucleoprotein</keyword>
<keyword id="KW-0689">Ribosomal protein</keyword>
<dbReference type="EMBL" id="BX640437">
    <property type="protein sequence ID" value="CAE30515.1"/>
    <property type="molecule type" value="Genomic_DNA"/>
</dbReference>
<dbReference type="RefSeq" id="WP_003806889.1">
    <property type="nucleotide sequence ID" value="NC_002927.3"/>
</dbReference>
<dbReference type="SMR" id="Q7WRE0"/>
<dbReference type="GeneID" id="93206242"/>
<dbReference type="KEGG" id="bbr:BB0013"/>
<dbReference type="eggNOG" id="COG0222">
    <property type="taxonomic scope" value="Bacteria"/>
</dbReference>
<dbReference type="HOGENOM" id="CLU_086499_3_2_4"/>
<dbReference type="Proteomes" id="UP000001027">
    <property type="component" value="Chromosome"/>
</dbReference>
<dbReference type="GO" id="GO:0022625">
    <property type="term" value="C:cytosolic large ribosomal subunit"/>
    <property type="evidence" value="ECO:0007669"/>
    <property type="project" value="TreeGrafter"/>
</dbReference>
<dbReference type="GO" id="GO:0003729">
    <property type="term" value="F:mRNA binding"/>
    <property type="evidence" value="ECO:0007669"/>
    <property type="project" value="TreeGrafter"/>
</dbReference>
<dbReference type="GO" id="GO:0003735">
    <property type="term" value="F:structural constituent of ribosome"/>
    <property type="evidence" value="ECO:0007669"/>
    <property type="project" value="InterPro"/>
</dbReference>
<dbReference type="GO" id="GO:0006412">
    <property type="term" value="P:translation"/>
    <property type="evidence" value="ECO:0007669"/>
    <property type="project" value="UniProtKB-UniRule"/>
</dbReference>
<dbReference type="CDD" id="cd00387">
    <property type="entry name" value="Ribosomal_L7_L12"/>
    <property type="match status" value="1"/>
</dbReference>
<dbReference type="FunFam" id="3.30.1390.10:FF:000001">
    <property type="entry name" value="50S ribosomal protein L7/L12"/>
    <property type="match status" value="1"/>
</dbReference>
<dbReference type="Gene3D" id="3.30.1390.10">
    <property type="match status" value="1"/>
</dbReference>
<dbReference type="Gene3D" id="1.20.5.710">
    <property type="entry name" value="Single helix bin"/>
    <property type="match status" value="1"/>
</dbReference>
<dbReference type="HAMAP" id="MF_00368">
    <property type="entry name" value="Ribosomal_bL12"/>
    <property type="match status" value="1"/>
</dbReference>
<dbReference type="InterPro" id="IPR000206">
    <property type="entry name" value="Ribosomal_bL12"/>
</dbReference>
<dbReference type="InterPro" id="IPR013823">
    <property type="entry name" value="Ribosomal_bL12_C"/>
</dbReference>
<dbReference type="InterPro" id="IPR014719">
    <property type="entry name" value="Ribosomal_bL12_C/ClpS-like"/>
</dbReference>
<dbReference type="InterPro" id="IPR008932">
    <property type="entry name" value="Ribosomal_bL12_oligo"/>
</dbReference>
<dbReference type="InterPro" id="IPR036235">
    <property type="entry name" value="Ribosomal_bL12_oligo_N_sf"/>
</dbReference>
<dbReference type="NCBIfam" id="TIGR00855">
    <property type="entry name" value="L12"/>
    <property type="match status" value="1"/>
</dbReference>
<dbReference type="PANTHER" id="PTHR45987">
    <property type="entry name" value="39S RIBOSOMAL PROTEIN L12"/>
    <property type="match status" value="1"/>
</dbReference>
<dbReference type="PANTHER" id="PTHR45987:SF4">
    <property type="entry name" value="LARGE RIBOSOMAL SUBUNIT PROTEIN BL12M"/>
    <property type="match status" value="1"/>
</dbReference>
<dbReference type="Pfam" id="PF00542">
    <property type="entry name" value="Ribosomal_L12"/>
    <property type="match status" value="1"/>
</dbReference>
<dbReference type="Pfam" id="PF16320">
    <property type="entry name" value="Ribosomal_L12_N"/>
    <property type="match status" value="1"/>
</dbReference>
<dbReference type="SUPFAM" id="SSF54736">
    <property type="entry name" value="ClpS-like"/>
    <property type="match status" value="1"/>
</dbReference>
<dbReference type="SUPFAM" id="SSF48300">
    <property type="entry name" value="Ribosomal protein L7/12, oligomerisation (N-terminal) domain"/>
    <property type="match status" value="1"/>
</dbReference>
<name>RL7_BORBR</name>
<protein>
    <recommendedName>
        <fullName evidence="1">Large ribosomal subunit protein bL12</fullName>
    </recommendedName>
    <alternativeName>
        <fullName evidence="2">50S ribosomal protein L7/L12</fullName>
    </alternativeName>
</protein>
<accession>Q7WRE0</accession>
<organism>
    <name type="scientific">Bordetella bronchiseptica (strain ATCC BAA-588 / NCTC 13252 / RB50)</name>
    <name type="common">Alcaligenes bronchisepticus</name>
    <dbReference type="NCBI Taxonomy" id="257310"/>
    <lineage>
        <taxon>Bacteria</taxon>
        <taxon>Pseudomonadati</taxon>
        <taxon>Pseudomonadota</taxon>
        <taxon>Betaproteobacteria</taxon>
        <taxon>Burkholderiales</taxon>
        <taxon>Alcaligenaceae</taxon>
        <taxon>Bordetella</taxon>
    </lineage>
</organism>
<feature type="chain" id="PRO_0000243395" description="Large ribosomal subunit protein bL12">
    <location>
        <begin position="1"/>
        <end position="127"/>
    </location>
</feature>
<comment type="function">
    <text evidence="1">Forms part of the ribosomal stalk which helps the ribosome interact with GTP-bound translation factors. Is thus essential for accurate translation.</text>
</comment>
<comment type="subunit">
    <text evidence="1">Homodimer. Part of the ribosomal stalk of the 50S ribosomal subunit. Forms a multimeric L10(L12)X complex, where L10 forms an elongated spine to which 2 to 4 L12 dimers bind in a sequential fashion. Binds GTP-bound translation factors.</text>
</comment>
<comment type="similarity">
    <text evidence="1">Belongs to the bacterial ribosomal protein bL12 family.</text>
</comment>
<sequence>MALSKAEILDAIAGMSVLELSELIKEMEEKFGVSAAAAAVAVAAPAAGGAGAAAAEEQTEFTVVLLEAGANKVSVIKAVRELTGLGLKEAKDLVDGAPKPVKEALPKADAEAAKKKLEEAGAKVEVK</sequence>
<gene>
    <name evidence="1" type="primary">rplL</name>
    <name type="ordered locus">BB0013</name>
</gene>